<sequence>MPAPCNCIETNVCICDTGCSGEGCRCGDACKCSGADCKCSGCKVVCKCSGSCACEGGCTGPSTCKCAPGCSCK</sequence>
<dbReference type="EMBL" id="AJ007506">
    <property type="protein sequence ID" value="CAA07546.1"/>
    <property type="molecule type" value="mRNA"/>
</dbReference>
<dbReference type="EMBL" id="AJ005455">
    <property type="protein sequence ID" value="CAA06552.1"/>
    <property type="molecule type" value="mRNA"/>
</dbReference>
<dbReference type="PIR" id="S39419">
    <property type="entry name" value="S39419"/>
</dbReference>
<dbReference type="SMR" id="P80249"/>
<dbReference type="OrthoDB" id="6107303at2759"/>
<dbReference type="GO" id="GO:0046872">
    <property type="term" value="F:metal ion binding"/>
    <property type="evidence" value="ECO:0007669"/>
    <property type="project" value="UniProtKB-KW"/>
</dbReference>
<dbReference type="InterPro" id="IPR001008">
    <property type="entry name" value="Metalthion_mollusc"/>
</dbReference>
<dbReference type="PRINTS" id="PR00875">
    <property type="entry name" value="MTMOLLUSC"/>
</dbReference>
<accession>P80249</accession>
<name>MT14_MYTED</name>
<protein>
    <recommendedName>
        <fullName>Metallothionein 10-IV</fullName>
        <shortName>MT-10-IV</shortName>
    </recommendedName>
</protein>
<reference key="1">
    <citation type="journal article" date="2000" name="Mar. Biotechnol.">
        <title>Metallothionein isoforms in Mytilus edulis (Mollusca, Bivalvia): complementary DNA characterization and quantification of expression in different organs after exposure to cadmium, zinc, and copper.</title>
        <authorList>
            <person name="Lemoine S."/>
            <person name="Bigot Y."/>
            <person name="Sellos D."/>
            <person name="Cosson R.P."/>
            <person name="Laulier M."/>
        </authorList>
    </citation>
    <scope>NUCLEOTIDE SEQUENCE [MRNA]</scope>
    <source>
        <tissue>Mantle</tissue>
    </source>
</reference>
<reference key="2">
    <citation type="journal article" date="1993" name="Eur. J. Biochem.">
        <title>Complete amino acid sequences of five dimeric and four monomeric forms of metallothionein from the edible mussel Mytilus edulis.</title>
        <authorList>
            <person name="Mackay E.A."/>
            <person name="Overnell J."/>
            <person name="Dunbar B."/>
            <person name="Davidson I."/>
            <person name="Hunziker P.E."/>
            <person name="Kaegi J.H.R."/>
            <person name="Fothergill J.E."/>
        </authorList>
    </citation>
    <scope>PROTEIN SEQUENCE OF 2-73</scope>
</reference>
<reference key="3">
    <citation type="journal article" date="1999" name="Comp. Biochem. Physiol.">
        <title>Cloning and characterization of metallothionein cDNAs in the mussel Mytilus edulis L. digestive gland.</title>
        <authorList>
            <person name="Barsyte D."/>
            <person name="White K.N."/>
            <person name="Lovejoy D.A."/>
        </authorList>
    </citation>
    <scope>NUCLEOTIDE SEQUENCE [MRNA] OF 22-73</scope>
    <source>
        <tissue>Digestive gland</tissue>
    </source>
</reference>
<proteinExistence type="evidence at protein level"/>
<evidence type="ECO:0000250" key="1">
    <source>
        <dbReference type="UniProtKB" id="P33187"/>
    </source>
</evidence>
<evidence type="ECO:0000269" key="2">
    <source>
    </source>
</evidence>
<evidence type="ECO:0000305" key="3"/>
<keyword id="KW-0104">Cadmium</keyword>
<keyword id="KW-0903">Direct protein sequencing</keyword>
<keyword id="KW-0479">Metal-binding</keyword>
<keyword id="KW-0480">Metal-thiolate cluster</keyword>
<feature type="initiator methionine" description="Removed" evidence="2">
    <location>
        <position position="1"/>
    </location>
</feature>
<feature type="chain" id="PRO_0000197328" description="Metallothionein 10-IV">
    <location>
        <begin position="2"/>
        <end position="73"/>
    </location>
</feature>
<feature type="binding site" evidence="1">
    <location>
        <position position="15"/>
    </location>
    <ligand>
        <name>Cd(2+)</name>
        <dbReference type="ChEBI" id="CHEBI:48775"/>
        <label>1</label>
    </ligand>
</feature>
<feature type="binding site" evidence="1">
    <location>
        <position position="19"/>
    </location>
    <ligand>
        <name>Cd(2+)</name>
        <dbReference type="ChEBI" id="CHEBI:48775"/>
        <label>1</label>
    </ligand>
</feature>
<feature type="binding site" evidence="1">
    <location>
        <position position="19"/>
    </location>
    <ligand>
        <name>Cd(2+)</name>
        <dbReference type="ChEBI" id="CHEBI:48775"/>
        <label>2</label>
    </ligand>
</feature>
<feature type="binding site" evidence="1">
    <location>
        <position position="24"/>
    </location>
    <ligand>
        <name>Cd(2+)</name>
        <dbReference type="ChEBI" id="CHEBI:48775"/>
        <label>2</label>
    </ligand>
</feature>
<feature type="binding site" evidence="1">
    <location>
        <position position="26"/>
    </location>
    <ligand>
        <name>Cd(2+)</name>
        <dbReference type="ChEBI" id="CHEBI:48775"/>
        <label>3</label>
    </ligand>
</feature>
<feature type="binding site" evidence="1">
    <location>
        <position position="30"/>
    </location>
    <ligand>
        <name>Cd(2+)</name>
        <dbReference type="ChEBI" id="CHEBI:48775"/>
        <label>3</label>
    </ligand>
</feature>
<feature type="binding site" evidence="1">
    <location>
        <position position="32"/>
    </location>
    <ligand>
        <name>Cd(2+)</name>
        <dbReference type="ChEBI" id="CHEBI:48775"/>
        <label>1</label>
    </ligand>
</feature>
<feature type="binding site" evidence="1">
    <location>
        <position position="32"/>
    </location>
    <ligand>
        <name>Cd(2+)</name>
        <dbReference type="ChEBI" id="CHEBI:48775"/>
        <label>3</label>
    </ligand>
</feature>
<feature type="binding site" evidence="1">
    <location>
        <position position="37"/>
    </location>
    <ligand>
        <name>Cd(2+)</name>
        <dbReference type="ChEBI" id="CHEBI:48775"/>
        <label>1</label>
    </ligand>
</feature>
<feature type="binding site" evidence="1">
    <location>
        <position position="39"/>
    </location>
    <ligand>
        <name>Cd(2+)</name>
        <dbReference type="ChEBI" id="CHEBI:48775"/>
        <label>2</label>
    </ligand>
</feature>
<feature type="binding site" evidence="1">
    <location>
        <position position="42"/>
    </location>
    <ligand>
        <name>Cd(2+)</name>
        <dbReference type="ChEBI" id="CHEBI:48775"/>
        <label>2</label>
    </ligand>
</feature>
<feature type="binding site" evidence="1">
    <location>
        <position position="42"/>
    </location>
    <ligand>
        <name>Cd(2+)</name>
        <dbReference type="ChEBI" id="CHEBI:48775"/>
        <label>3</label>
    </ligand>
</feature>
<feature type="binding site" evidence="1">
    <location>
        <position position="46"/>
    </location>
    <ligand>
        <name>Cd(2+)</name>
        <dbReference type="ChEBI" id="CHEBI:48775"/>
        <label>4</label>
    </ligand>
</feature>
<feature type="binding site" evidence="1">
    <location>
        <position position="48"/>
    </location>
    <ligand>
        <name>Cd(2+)</name>
        <dbReference type="ChEBI" id="CHEBI:48775"/>
        <label>5</label>
    </ligand>
</feature>
<feature type="binding site" evidence="1">
    <location>
        <position position="52"/>
    </location>
    <ligand>
        <name>Cd(2+)</name>
        <dbReference type="ChEBI" id="CHEBI:48775"/>
        <label>5</label>
    </ligand>
</feature>
<feature type="binding site" evidence="1">
    <location>
        <position position="54"/>
    </location>
    <ligand>
        <name>Cd(2+)</name>
        <dbReference type="ChEBI" id="CHEBI:48775"/>
        <label>5</label>
    </ligand>
</feature>
<feature type="binding site" evidence="1">
    <location>
        <position position="54"/>
    </location>
    <ligand>
        <name>Cd(2+)</name>
        <dbReference type="ChEBI" id="CHEBI:48775"/>
        <label>6</label>
    </ligand>
</feature>
<feature type="binding site" evidence="1">
    <location>
        <position position="58"/>
    </location>
    <ligand>
        <name>Cd(2+)</name>
        <dbReference type="ChEBI" id="CHEBI:48775"/>
        <label>4</label>
    </ligand>
</feature>
<feature type="binding site" evidence="1">
    <location>
        <position position="58"/>
    </location>
    <ligand>
        <name>Cd(2+)</name>
        <dbReference type="ChEBI" id="CHEBI:48775"/>
        <label>5</label>
    </ligand>
</feature>
<feature type="binding site" evidence="1">
    <location>
        <position position="64"/>
    </location>
    <ligand>
        <name>Cd(2+)</name>
        <dbReference type="ChEBI" id="CHEBI:48775"/>
        <label>4</label>
    </ligand>
</feature>
<feature type="binding site" evidence="1">
    <location>
        <position position="66"/>
    </location>
    <ligand>
        <name>Cd(2+)</name>
        <dbReference type="ChEBI" id="CHEBI:48775"/>
        <label>6</label>
    </ligand>
</feature>
<feature type="binding site" evidence="1">
    <location>
        <position position="70"/>
    </location>
    <ligand>
        <name>Cd(2+)</name>
        <dbReference type="ChEBI" id="CHEBI:48775"/>
        <label>6</label>
    </ligand>
</feature>
<feature type="binding site" evidence="1">
    <location>
        <position position="72"/>
    </location>
    <ligand>
        <name>Cd(2+)</name>
        <dbReference type="ChEBI" id="CHEBI:48775"/>
        <label>4</label>
    </ligand>
</feature>
<feature type="binding site" evidence="1">
    <location>
        <position position="72"/>
    </location>
    <ligand>
        <name>Cd(2+)</name>
        <dbReference type="ChEBI" id="CHEBI:48775"/>
        <label>6</label>
    </ligand>
</feature>
<comment type="function">
    <text>The metallothioneins are involved in the cellular sequestration of toxic metal ions.</text>
</comment>
<comment type="subunit">
    <text>Monomer.</text>
</comment>
<comment type="induction">
    <text>By cadmium.</text>
</comment>
<comment type="similarity">
    <text evidence="3">Belongs to the metallothionein superfamily. Type 2 family.</text>
</comment>
<organism>
    <name type="scientific">Mytilus edulis</name>
    <name type="common">Blue mussel</name>
    <dbReference type="NCBI Taxonomy" id="6550"/>
    <lineage>
        <taxon>Eukaryota</taxon>
        <taxon>Metazoa</taxon>
        <taxon>Spiralia</taxon>
        <taxon>Lophotrochozoa</taxon>
        <taxon>Mollusca</taxon>
        <taxon>Bivalvia</taxon>
        <taxon>Autobranchia</taxon>
        <taxon>Pteriomorphia</taxon>
        <taxon>Mytilida</taxon>
        <taxon>Mytiloidea</taxon>
        <taxon>Mytilidae</taxon>
        <taxon>Mytilinae</taxon>
        <taxon>Mytilus</taxon>
    </lineage>
</organism>